<gene>
    <name evidence="1" type="primary">ispE</name>
    <name type="synonym">ipk</name>
    <name type="ordered locus">CPE2212</name>
</gene>
<accession>Q8XIA9</accession>
<keyword id="KW-0067">ATP-binding</keyword>
<keyword id="KW-0414">Isoprene biosynthesis</keyword>
<keyword id="KW-0418">Kinase</keyword>
<keyword id="KW-0547">Nucleotide-binding</keyword>
<keyword id="KW-1185">Reference proteome</keyword>
<keyword id="KW-0808">Transferase</keyword>
<comment type="function">
    <text evidence="1">Catalyzes the phosphorylation of the position 2 hydroxy group of 4-diphosphocytidyl-2C-methyl-D-erythritol.</text>
</comment>
<comment type="catalytic activity">
    <reaction evidence="1">
        <text>4-CDP-2-C-methyl-D-erythritol + ATP = 4-CDP-2-C-methyl-D-erythritol 2-phosphate + ADP + H(+)</text>
        <dbReference type="Rhea" id="RHEA:18437"/>
        <dbReference type="ChEBI" id="CHEBI:15378"/>
        <dbReference type="ChEBI" id="CHEBI:30616"/>
        <dbReference type="ChEBI" id="CHEBI:57823"/>
        <dbReference type="ChEBI" id="CHEBI:57919"/>
        <dbReference type="ChEBI" id="CHEBI:456216"/>
        <dbReference type="EC" id="2.7.1.148"/>
    </reaction>
</comment>
<comment type="pathway">
    <text evidence="1">Isoprenoid biosynthesis; isopentenyl diphosphate biosynthesis via DXP pathway; isopentenyl diphosphate from 1-deoxy-D-xylulose 5-phosphate: step 3/6.</text>
</comment>
<comment type="similarity">
    <text evidence="1">Belongs to the GHMP kinase family. IspE subfamily.</text>
</comment>
<evidence type="ECO:0000255" key="1">
    <source>
        <dbReference type="HAMAP-Rule" id="MF_00061"/>
    </source>
</evidence>
<proteinExistence type="inferred from homology"/>
<name>ISPE_CLOPE</name>
<organism>
    <name type="scientific">Clostridium perfringens (strain 13 / Type A)</name>
    <dbReference type="NCBI Taxonomy" id="195102"/>
    <lineage>
        <taxon>Bacteria</taxon>
        <taxon>Bacillati</taxon>
        <taxon>Bacillota</taxon>
        <taxon>Clostridia</taxon>
        <taxon>Eubacteriales</taxon>
        <taxon>Clostridiaceae</taxon>
        <taxon>Clostridium</taxon>
    </lineage>
</organism>
<feature type="chain" id="PRO_0000189208" description="4-diphosphocytidyl-2-C-methyl-D-erythritol kinase">
    <location>
        <begin position="1"/>
        <end position="288"/>
    </location>
</feature>
<feature type="active site" evidence="1">
    <location>
        <position position="8"/>
    </location>
</feature>
<feature type="active site" evidence="1">
    <location>
        <position position="134"/>
    </location>
</feature>
<feature type="binding site" evidence="1">
    <location>
        <begin position="92"/>
        <end position="102"/>
    </location>
    <ligand>
        <name>ATP</name>
        <dbReference type="ChEBI" id="CHEBI:30616"/>
    </ligand>
</feature>
<dbReference type="EC" id="2.7.1.148" evidence="1"/>
<dbReference type="EMBL" id="BA000016">
    <property type="protein sequence ID" value="BAB81918.1"/>
    <property type="molecule type" value="Genomic_DNA"/>
</dbReference>
<dbReference type="RefSeq" id="WP_011010819.1">
    <property type="nucleotide sequence ID" value="NC_003366.1"/>
</dbReference>
<dbReference type="SMR" id="Q8XIA9"/>
<dbReference type="STRING" id="195102.gene:10491491"/>
<dbReference type="KEGG" id="cpe:CPE2212"/>
<dbReference type="HOGENOM" id="CLU_053057_1_1_9"/>
<dbReference type="UniPathway" id="UPA00056">
    <property type="reaction ID" value="UER00094"/>
</dbReference>
<dbReference type="Proteomes" id="UP000000818">
    <property type="component" value="Chromosome"/>
</dbReference>
<dbReference type="GO" id="GO:0050515">
    <property type="term" value="F:4-(cytidine 5'-diphospho)-2-C-methyl-D-erythritol kinase activity"/>
    <property type="evidence" value="ECO:0007669"/>
    <property type="project" value="UniProtKB-UniRule"/>
</dbReference>
<dbReference type="GO" id="GO:0005524">
    <property type="term" value="F:ATP binding"/>
    <property type="evidence" value="ECO:0007669"/>
    <property type="project" value="UniProtKB-UniRule"/>
</dbReference>
<dbReference type="GO" id="GO:0019288">
    <property type="term" value="P:isopentenyl diphosphate biosynthetic process, methylerythritol 4-phosphate pathway"/>
    <property type="evidence" value="ECO:0007669"/>
    <property type="project" value="UniProtKB-UniRule"/>
</dbReference>
<dbReference type="GO" id="GO:0016114">
    <property type="term" value="P:terpenoid biosynthetic process"/>
    <property type="evidence" value="ECO:0007669"/>
    <property type="project" value="InterPro"/>
</dbReference>
<dbReference type="FunFam" id="3.30.230.10:FF:000029">
    <property type="entry name" value="4-diphosphocytidyl-2-C-methyl-D-erythritol kinase"/>
    <property type="match status" value="1"/>
</dbReference>
<dbReference type="Gene3D" id="3.30.230.10">
    <property type="match status" value="1"/>
</dbReference>
<dbReference type="Gene3D" id="3.30.70.890">
    <property type="entry name" value="GHMP kinase, C-terminal domain"/>
    <property type="match status" value="1"/>
</dbReference>
<dbReference type="HAMAP" id="MF_00061">
    <property type="entry name" value="IspE"/>
    <property type="match status" value="1"/>
</dbReference>
<dbReference type="InterPro" id="IPR013750">
    <property type="entry name" value="GHMP_kinase_C_dom"/>
</dbReference>
<dbReference type="InterPro" id="IPR036554">
    <property type="entry name" value="GHMP_kinase_C_sf"/>
</dbReference>
<dbReference type="InterPro" id="IPR006204">
    <property type="entry name" value="GHMP_kinase_N_dom"/>
</dbReference>
<dbReference type="InterPro" id="IPR004424">
    <property type="entry name" value="IspE"/>
</dbReference>
<dbReference type="InterPro" id="IPR020568">
    <property type="entry name" value="Ribosomal_Su5_D2-typ_SF"/>
</dbReference>
<dbReference type="InterPro" id="IPR014721">
    <property type="entry name" value="Ribsml_uS5_D2-typ_fold_subgr"/>
</dbReference>
<dbReference type="NCBIfam" id="TIGR00154">
    <property type="entry name" value="ispE"/>
    <property type="match status" value="1"/>
</dbReference>
<dbReference type="PANTHER" id="PTHR43527">
    <property type="entry name" value="4-DIPHOSPHOCYTIDYL-2-C-METHYL-D-ERYTHRITOL KINASE, CHLOROPLASTIC"/>
    <property type="match status" value="1"/>
</dbReference>
<dbReference type="PANTHER" id="PTHR43527:SF2">
    <property type="entry name" value="4-DIPHOSPHOCYTIDYL-2-C-METHYL-D-ERYTHRITOL KINASE, CHLOROPLASTIC"/>
    <property type="match status" value="1"/>
</dbReference>
<dbReference type="Pfam" id="PF08544">
    <property type="entry name" value="GHMP_kinases_C"/>
    <property type="match status" value="1"/>
</dbReference>
<dbReference type="Pfam" id="PF00288">
    <property type="entry name" value="GHMP_kinases_N"/>
    <property type="match status" value="1"/>
</dbReference>
<dbReference type="PIRSF" id="PIRSF010376">
    <property type="entry name" value="IspE"/>
    <property type="match status" value="1"/>
</dbReference>
<dbReference type="SUPFAM" id="SSF55060">
    <property type="entry name" value="GHMP Kinase, C-terminal domain"/>
    <property type="match status" value="1"/>
</dbReference>
<dbReference type="SUPFAM" id="SSF54211">
    <property type="entry name" value="Ribosomal protein S5 domain 2-like"/>
    <property type="match status" value="1"/>
</dbReference>
<protein>
    <recommendedName>
        <fullName evidence="1">4-diphosphocytidyl-2-C-methyl-D-erythritol kinase</fullName>
        <shortName evidence="1">CMK</shortName>
        <ecNumber evidence="1">2.7.1.148</ecNumber>
    </recommendedName>
    <alternativeName>
        <fullName evidence="1">4-(cytidine-5'-diphospho)-2-C-methyl-D-erythritol kinase</fullName>
    </alternativeName>
</protein>
<reference key="1">
    <citation type="journal article" date="2002" name="Proc. Natl. Acad. Sci. U.S.A.">
        <title>Complete genome sequence of Clostridium perfringens, an anaerobic flesh-eater.</title>
        <authorList>
            <person name="Shimizu T."/>
            <person name="Ohtani K."/>
            <person name="Hirakawa H."/>
            <person name="Ohshima K."/>
            <person name="Yamashita A."/>
            <person name="Shiba T."/>
            <person name="Ogasawara N."/>
            <person name="Hattori M."/>
            <person name="Kuhara S."/>
            <person name="Hayashi H."/>
        </authorList>
    </citation>
    <scope>NUCLEOTIDE SEQUENCE [LARGE SCALE GENOMIC DNA]</scope>
    <source>
        <strain>13 / Type A</strain>
    </source>
</reference>
<sequence length="288" mass="32086">MKMKAYAKINIALDAIGKREDNYHLLRMIMQTVDLYDVIDIEKSNDSNISISCNKHYVSTDERNLAYKAAVLFRDEFNIKDGVKINIKKNIPVAAGMAGGSTNAAAVLVIMNKLFNVNASLEVLKEIGLKIGADVPYCIEGGTALCEGIGEIITPLKPFENKILVVLKPNFGVSTKEVYTNLDINKIRKHVNIEGLIQAMENDDLDYVSKNMKNVLENVTLKKHTILKNIKEDMRKSGALGAMMSGSGPTVFAFFDDMLTAQRAFEFLKGKYKYSDVYITRTINSNNL</sequence>